<sequence length="461" mass="52331">MSSDKAKAFDAQFPTYKSEFQIPTFESLGIQNSKYSPETNSIYLCGNSLGLMPRNTTELINRELQAWSSRGVEAHFNHSHPQGTDWVDIDLPLLPLLAPLVGAKQNEVAVMGSLTSNLNALLIHFYKPKGKRTKILFEKQAFPSDYYAFLNIVQVFGYDASHLIQIEIPKGETYIKTETILDVFDKYEDEIAIVCLPGIQYYTGQFFDIAKITKHVKTSAPDVVVGWDLAHAVGNVPLSLHDWGVDFAAWCSYKYLNAGPGAIAGIFVNEKYTEQNKPENYKPRLAGWWGNNSSQRFQMLEKFDPIASALSYRQLNPSVLDCVALKSSLEIFNKVGGMLSLRDKSLAMTQFLQDILTKSNYYIEQGETDVNKFGFKIITPLDPNQRGCQLSLLFQPHRDEKKQNVMERVFEYLHQHAIICDERRPDVIRLAPLPLYNTFEETRIGATRLLEALEAIKDDYI</sequence>
<keyword id="KW-0963">Cytoplasm</keyword>
<keyword id="KW-0378">Hydrolase</keyword>
<keyword id="KW-0662">Pyridine nucleotide biosynthesis</keyword>
<keyword id="KW-0663">Pyridoxal phosphate</keyword>
<keyword id="KW-1185">Reference proteome</keyword>
<accession>A5DTF4</accession>
<evidence type="ECO:0000255" key="1">
    <source>
        <dbReference type="HAMAP-Rule" id="MF_03017"/>
    </source>
</evidence>
<name>KYNU_LODEL</name>
<protein>
    <recommendedName>
        <fullName evidence="1">Kynureninase</fullName>
        <ecNumber evidence="1">3.7.1.3</ecNumber>
    </recommendedName>
    <alternativeName>
        <fullName evidence="1">Biosynthesis of nicotinic acid protein 5</fullName>
    </alternativeName>
    <alternativeName>
        <fullName evidence="1">L-kynurenine hydrolase</fullName>
    </alternativeName>
</protein>
<reference key="1">
    <citation type="journal article" date="2009" name="Nature">
        <title>Evolution of pathogenicity and sexual reproduction in eight Candida genomes.</title>
        <authorList>
            <person name="Butler G."/>
            <person name="Rasmussen M.D."/>
            <person name="Lin M.F."/>
            <person name="Santos M.A.S."/>
            <person name="Sakthikumar S."/>
            <person name="Munro C.A."/>
            <person name="Rheinbay E."/>
            <person name="Grabherr M."/>
            <person name="Forche A."/>
            <person name="Reedy J.L."/>
            <person name="Agrafioti I."/>
            <person name="Arnaud M.B."/>
            <person name="Bates S."/>
            <person name="Brown A.J.P."/>
            <person name="Brunke S."/>
            <person name="Costanzo M.C."/>
            <person name="Fitzpatrick D.A."/>
            <person name="de Groot P.W.J."/>
            <person name="Harris D."/>
            <person name="Hoyer L.L."/>
            <person name="Hube B."/>
            <person name="Klis F.M."/>
            <person name="Kodira C."/>
            <person name="Lennard N."/>
            <person name="Logue M.E."/>
            <person name="Martin R."/>
            <person name="Neiman A.M."/>
            <person name="Nikolaou E."/>
            <person name="Quail M.A."/>
            <person name="Quinn J."/>
            <person name="Santos M.C."/>
            <person name="Schmitzberger F.F."/>
            <person name="Sherlock G."/>
            <person name="Shah P."/>
            <person name="Silverstein K.A.T."/>
            <person name="Skrzypek M.S."/>
            <person name="Soll D."/>
            <person name="Staggs R."/>
            <person name="Stansfield I."/>
            <person name="Stumpf M.P.H."/>
            <person name="Sudbery P.E."/>
            <person name="Srikantha T."/>
            <person name="Zeng Q."/>
            <person name="Berman J."/>
            <person name="Berriman M."/>
            <person name="Heitman J."/>
            <person name="Gow N.A.R."/>
            <person name="Lorenz M.C."/>
            <person name="Birren B.W."/>
            <person name="Kellis M."/>
            <person name="Cuomo C.A."/>
        </authorList>
    </citation>
    <scope>NUCLEOTIDE SEQUENCE [LARGE SCALE GENOMIC DNA]</scope>
    <source>
        <strain>ATCC 11503 / BCRC 21390 / CBS 2605 / JCM 1781 / NBRC 1676 / NRRL YB-4239</strain>
    </source>
</reference>
<gene>
    <name evidence="1" type="primary">BNA5</name>
    <name type="ORF">LELG_00640</name>
</gene>
<organism>
    <name type="scientific">Lodderomyces elongisporus (strain ATCC 11503 / CBS 2605 / JCM 1781 / NBRC 1676 / NRRL YB-4239)</name>
    <name type="common">Yeast</name>
    <name type="synonym">Saccharomyces elongisporus</name>
    <dbReference type="NCBI Taxonomy" id="379508"/>
    <lineage>
        <taxon>Eukaryota</taxon>
        <taxon>Fungi</taxon>
        <taxon>Dikarya</taxon>
        <taxon>Ascomycota</taxon>
        <taxon>Saccharomycotina</taxon>
        <taxon>Pichiomycetes</taxon>
        <taxon>Debaryomycetaceae</taxon>
        <taxon>Candida/Lodderomyces clade</taxon>
        <taxon>Lodderomyces</taxon>
    </lineage>
</organism>
<comment type="function">
    <text evidence="1">Catalyzes the cleavage of L-kynurenine (L-Kyn) and L-3-hydroxykynurenine (L-3OHKyn) into anthranilic acid (AA) and 3-hydroxyanthranilic acid (3-OHAA), respectively.</text>
</comment>
<comment type="catalytic activity">
    <reaction evidence="1">
        <text>L-kynurenine + H2O = anthranilate + L-alanine + H(+)</text>
        <dbReference type="Rhea" id="RHEA:16813"/>
        <dbReference type="ChEBI" id="CHEBI:15377"/>
        <dbReference type="ChEBI" id="CHEBI:15378"/>
        <dbReference type="ChEBI" id="CHEBI:16567"/>
        <dbReference type="ChEBI" id="CHEBI:57959"/>
        <dbReference type="ChEBI" id="CHEBI:57972"/>
        <dbReference type="EC" id="3.7.1.3"/>
    </reaction>
</comment>
<comment type="catalytic activity">
    <reaction evidence="1">
        <text>3-hydroxy-L-kynurenine + H2O = 3-hydroxyanthranilate + L-alanine + H(+)</text>
        <dbReference type="Rhea" id="RHEA:25143"/>
        <dbReference type="ChEBI" id="CHEBI:15377"/>
        <dbReference type="ChEBI" id="CHEBI:15378"/>
        <dbReference type="ChEBI" id="CHEBI:36559"/>
        <dbReference type="ChEBI" id="CHEBI:57972"/>
        <dbReference type="ChEBI" id="CHEBI:58125"/>
        <dbReference type="EC" id="3.7.1.3"/>
    </reaction>
</comment>
<comment type="cofactor">
    <cofactor evidence="1">
        <name>pyridoxal 5'-phosphate</name>
        <dbReference type="ChEBI" id="CHEBI:597326"/>
    </cofactor>
</comment>
<comment type="pathway">
    <text evidence="1">Amino-acid degradation; L-kynurenine degradation; L-alanine and anthranilate from L-kynurenine: step 1/1.</text>
</comment>
<comment type="pathway">
    <text evidence="1">Cofactor biosynthesis; NAD(+) biosynthesis; quinolinate from L-kynurenine: step 2/3.</text>
</comment>
<comment type="subunit">
    <text evidence="1">Homodimer.</text>
</comment>
<comment type="subcellular location">
    <subcellularLocation>
        <location evidence="1">Cytoplasm</location>
    </subcellularLocation>
</comment>
<comment type="similarity">
    <text evidence="1">Belongs to the kynureninase family.</text>
</comment>
<dbReference type="EC" id="3.7.1.3" evidence="1"/>
<dbReference type="EMBL" id="CH981524">
    <property type="protein sequence ID" value="EDK42462.1"/>
    <property type="molecule type" value="Genomic_DNA"/>
</dbReference>
<dbReference type="RefSeq" id="XP_001528120.1">
    <property type="nucleotide sequence ID" value="XM_001528070.1"/>
</dbReference>
<dbReference type="SMR" id="A5DTF4"/>
<dbReference type="FunCoup" id="A5DTF4">
    <property type="interactions" value="196"/>
</dbReference>
<dbReference type="STRING" id="379508.A5DTF4"/>
<dbReference type="GeneID" id="5235575"/>
<dbReference type="KEGG" id="lel:PVL30_000620"/>
<dbReference type="VEuPathDB" id="FungiDB:LELG_00640"/>
<dbReference type="eggNOG" id="KOG3846">
    <property type="taxonomic scope" value="Eukaryota"/>
</dbReference>
<dbReference type="HOGENOM" id="CLU_003433_4_0_1"/>
<dbReference type="InParanoid" id="A5DTF4"/>
<dbReference type="OMA" id="YTEVWEF"/>
<dbReference type="OrthoDB" id="5978656at2759"/>
<dbReference type="UniPathway" id="UPA00253">
    <property type="reaction ID" value="UER00329"/>
</dbReference>
<dbReference type="UniPathway" id="UPA00334">
    <property type="reaction ID" value="UER00455"/>
</dbReference>
<dbReference type="Proteomes" id="UP000001996">
    <property type="component" value="Unassembled WGS sequence"/>
</dbReference>
<dbReference type="GO" id="GO:0005737">
    <property type="term" value="C:cytoplasm"/>
    <property type="evidence" value="ECO:0007669"/>
    <property type="project" value="UniProtKB-SubCell"/>
</dbReference>
<dbReference type="GO" id="GO:0030429">
    <property type="term" value="F:kynureninase activity"/>
    <property type="evidence" value="ECO:0007669"/>
    <property type="project" value="UniProtKB-UniRule"/>
</dbReference>
<dbReference type="GO" id="GO:0030170">
    <property type="term" value="F:pyridoxal phosphate binding"/>
    <property type="evidence" value="ECO:0007669"/>
    <property type="project" value="UniProtKB-UniRule"/>
</dbReference>
<dbReference type="GO" id="GO:0034354">
    <property type="term" value="P:'de novo' NAD biosynthetic process from L-tryptophan"/>
    <property type="evidence" value="ECO:0007669"/>
    <property type="project" value="UniProtKB-UniRule"/>
</dbReference>
<dbReference type="GO" id="GO:0043420">
    <property type="term" value="P:anthranilate metabolic process"/>
    <property type="evidence" value="ECO:0007669"/>
    <property type="project" value="UniProtKB-UniRule"/>
</dbReference>
<dbReference type="GO" id="GO:0097053">
    <property type="term" value="P:L-kynurenine catabolic process"/>
    <property type="evidence" value="ECO:0007669"/>
    <property type="project" value="UniProtKB-UniRule"/>
</dbReference>
<dbReference type="GO" id="GO:0019441">
    <property type="term" value="P:L-tryptophan catabolic process to kynurenine"/>
    <property type="evidence" value="ECO:0007669"/>
    <property type="project" value="TreeGrafter"/>
</dbReference>
<dbReference type="GO" id="GO:0019805">
    <property type="term" value="P:quinolinate biosynthetic process"/>
    <property type="evidence" value="ECO:0007669"/>
    <property type="project" value="UniProtKB-UniRule"/>
</dbReference>
<dbReference type="FunFam" id="3.40.640.10:FF:000031">
    <property type="entry name" value="Kynureninase"/>
    <property type="match status" value="1"/>
</dbReference>
<dbReference type="Gene3D" id="3.90.1150.10">
    <property type="entry name" value="Aspartate Aminotransferase, domain 1"/>
    <property type="match status" value="1"/>
</dbReference>
<dbReference type="Gene3D" id="3.40.640.10">
    <property type="entry name" value="Type I PLP-dependent aspartate aminotransferase-like (Major domain)"/>
    <property type="match status" value="1"/>
</dbReference>
<dbReference type="HAMAP" id="MF_01970">
    <property type="entry name" value="Kynureninase"/>
    <property type="match status" value="1"/>
</dbReference>
<dbReference type="InterPro" id="IPR000192">
    <property type="entry name" value="Aminotrans_V_dom"/>
</dbReference>
<dbReference type="InterPro" id="IPR010111">
    <property type="entry name" value="Kynureninase"/>
</dbReference>
<dbReference type="InterPro" id="IPR015424">
    <property type="entry name" value="PyrdxlP-dep_Trfase"/>
</dbReference>
<dbReference type="InterPro" id="IPR015421">
    <property type="entry name" value="PyrdxlP-dep_Trfase_major"/>
</dbReference>
<dbReference type="InterPro" id="IPR015422">
    <property type="entry name" value="PyrdxlP-dep_Trfase_small"/>
</dbReference>
<dbReference type="NCBIfam" id="TIGR01814">
    <property type="entry name" value="kynureninase"/>
    <property type="match status" value="1"/>
</dbReference>
<dbReference type="PANTHER" id="PTHR14084">
    <property type="entry name" value="KYNURENINASE"/>
    <property type="match status" value="1"/>
</dbReference>
<dbReference type="PANTHER" id="PTHR14084:SF0">
    <property type="entry name" value="KYNURENINASE"/>
    <property type="match status" value="1"/>
</dbReference>
<dbReference type="Pfam" id="PF00266">
    <property type="entry name" value="Aminotran_5"/>
    <property type="match status" value="1"/>
</dbReference>
<dbReference type="Pfam" id="PF22580">
    <property type="entry name" value="KYNU_C"/>
    <property type="match status" value="1"/>
</dbReference>
<dbReference type="PIRSF" id="PIRSF038800">
    <property type="entry name" value="KYNU"/>
    <property type="match status" value="1"/>
</dbReference>
<dbReference type="SUPFAM" id="SSF53383">
    <property type="entry name" value="PLP-dependent transferases"/>
    <property type="match status" value="1"/>
</dbReference>
<proteinExistence type="inferred from homology"/>
<feature type="chain" id="PRO_0000360869" description="Kynureninase">
    <location>
        <begin position="1"/>
        <end position="461"/>
    </location>
</feature>
<feature type="binding site" evidence="1">
    <location>
        <position position="114"/>
    </location>
    <ligand>
        <name>pyridoxal 5'-phosphate</name>
        <dbReference type="ChEBI" id="CHEBI:597326"/>
    </ligand>
</feature>
<feature type="binding site" evidence="1">
    <location>
        <position position="115"/>
    </location>
    <ligand>
        <name>pyridoxal 5'-phosphate</name>
        <dbReference type="ChEBI" id="CHEBI:597326"/>
    </ligand>
</feature>
<feature type="binding site" evidence="1">
    <location>
        <begin position="142"/>
        <end position="145"/>
    </location>
    <ligand>
        <name>pyridoxal 5'-phosphate</name>
        <dbReference type="ChEBI" id="CHEBI:597326"/>
    </ligand>
</feature>
<feature type="binding site" evidence="1">
    <location>
        <position position="228"/>
    </location>
    <ligand>
        <name>pyridoxal 5'-phosphate</name>
        <dbReference type="ChEBI" id="CHEBI:597326"/>
    </ligand>
</feature>
<feature type="binding site" evidence="1">
    <location>
        <position position="231"/>
    </location>
    <ligand>
        <name>pyridoxal 5'-phosphate</name>
        <dbReference type="ChEBI" id="CHEBI:597326"/>
    </ligand>
</feature>
<feature type="binding site" evidence="1">
    <location>
        <position position="253"/>
    </location>
    <ligand>
        <name>pyridoxal 5'-phosphate</name>
        <dbReference type="ChEBI" id="CHEBI:597326"/>
    </ligand>
</feature>
<feature type="binding site" evidence="1">
    <location>
        <position position="288"/>
    </location>
    <ligand>
        <name>pyridoxal 5'-phosphate</name>
        <dbReference type="ChEBI" id="CHEBI:597326"/>
    </ligand>
</feature>
<feature type="binding site" evidence="1">
    <location>
        <position position="316"/>
    </location>
    <ligand>
        <name>pyridoxal 5'-phosphate</name>
        <dbReference type="ChEBI" id="CHEBI:597326"/>
    </ligand>
</feature>
<feature type="modified residue" description="N6-(pyridoxal phosphate)lysine" evidence="1">
    <location>
        <position position="254"/>
    </location>
</feature>